<reference key="1">
    <citation type="journal article" date="2007" name="J. Bacteriol.">
        <title>Complete genome of acute rheumatic fever-associated serotype M5 Streptococcus pyogenes strain Manfredo.</title>
        <authorList>
            <person name="Holden M.T.G."/>
            <person name="Scott A."/>
            <person name="Cherevach I."/>
            <person name="Chillingworth T."/>
            <person name="Churcher C."/>
            <person name="Cronin A."/>
            <person name="Dowd L."/>
            <person name="Feltwell T."/>
            <person name="Hamlin N."/>
            <person name="Holroyd S."/>
            <person name="Jagels K."/>
            <person name="Moule S."/>
            <person name="Mungall K."/>
            <person name="Quail M.A."/>
            <person name="Price C."/>
            <person name="Rabbinowitsch E."/>
            <person name="Sharp S."/>
            <person name="Skelton J."/>
            <person name="Whitehead S."/>
            <person name="Barrell B.G."/>
            <person name="Kehoe M."/>
            <person name="Parkhill J."/>
        </authorList>
    </citation>
    <scope>NUCLEOTIDE SEQUENCE [LARGE SCALE GENOMIC DNA]</scope>
    <source>
        <strain>Manfredo</strain>
    </source>
</reference>
<accession>A2RGI4</accession>
<organism>
    <name type="scientific">Streptococcus pyogenes serotype M5 (strain Manfredo)</name>
    <dbReference type="NCBI Taxonomy" id="160491"/>
    <lineage>
        <taxon>Bacteria</taxon>
        <taxon>Bacillati</taxon>
        <taxon>Bacillota</taxon>
        <taxon>Bacilli</taxon>
        <taxon>Lactobacillales</taxon>
        <taxon>Streptococcaceae</taxon>
        <taxon>Streptococcus</taxon>
    </lineage>
</organism>
<name>SYP_STRPG</name>
<feature type="chain" id="PRO_0000288382" description="Proline--tRNA ligase">
    <location>
        <begin position="1"/>
        <end position="618"/>
    </location>
</feature>
<proteinExistence type="inferred from homology"/>
<sequence>MKQSKLLIPTLREMPSDAQVISHALMVRAGYVRQVSAGIYAYLPLANRTIEKFKTIMREEFEKIGAVEMLAPALLTADLWRESGRYETYGEDLYKLKNRDNSDFILGPTHEETFTTLVRDAVKSYKQLPLNLYQIQSKYRDEKRPRNGLLRTREFIMKDGYSFHHNYEDLDVTYEDYRQAYEAIFTRAGLDFKGIIGDGGAMGGKDSQEFMAITPARTDLDRWVVLDKSIASMDDIPKEVLEEIKAELAAWMISGEDTIAYSTESSYAANLEMATNEYKPSSKVAAEDALAEVETPHCKTIDEVAAFLSVDETQTIKTLLFVADNEPVVALLVGNDHINTVKLKNYLAADFLEPASEEEARAFFGAGFGSLGPVNLAQGSRIVADRKVQNLTNAVAGANKDGFHVTGVNPGRDFQAEYVDIREVKEGEMSPDGHGVLQFARGIEVGHIFKLGTRYSDSMGAKILDENGRAVPIVMGCYGIGVSRILSAVIEQHARLFVNKTPKGDYRYAWGINFPKELAPFDVHLITVNVKDQAAQDLTAKLEADLMAKGYDVLTDDRNERVGSKFSDSDLIGLPIRVTVGKKAAEGIVEIKIKATGDSIEVNAENLIETLEILTKEH</sequence>
<protein>
    <recommendedName>
        <fullName evidence="1">Proline--tRNA ligase</fullName>
        <ecNumber evidence="1">6.1.1.15</ecNumber>
    </recommendedName>
    <alternativeName>
        <fullName evidence="1">Prolyl-tRNA synthetase</fullName>
        <shortName evidence="1">ProRS</shortName>
    </alternativeName>
</protein>
<keyword id="KW-0030">Aminoacyl-tRNA synthetase</keyword>
<keyword id="KW-0067">ATP-binding</keyword>
<keyword id="KW-0963">Cytoplasm</keyword>
<keyword id="KW-0436">Ligase</keyword>
<keyword id="KW-0547">Nucleotide-binding</keyword>
<keyword id="KW-0648">Protein biosynthesis</keyword>
<dbReference type="EC" id="6.1.1.15" evidence="1"/>
<dbReference type="EMBL" id="AM295007">
    <property type="protein sequence ID" value="CAM30966.1"/>
    <property type="molecule type" value="Genomic_DNA"/>
</dbReference>
<dbReference type="RefSeq" id="WP_011184986.1">
    <property type="nucleotide sequence ID" value="NC_009332.1"/>
</dbReference>
<dbReference type="SMR" id="A2RGI4"/>
<dbReference type="KEGG" id="spf:SpyM51645"/>
<dbReference type="HOGENOM" id="CLU_016739_0_0_9"/>
<dbReference type="GO" id="GO:0005829">
    <property type="term" value="C:cytosol"/>
    <property type="evidence" value="ECO:0007669"/>
    <property type="project" value="TreeGrafter"/>
</dbReference>
<dbReference type="GO" id="GO:0002161">
    <property type="term" value="F:aminoacyl-tRNA deacylase activity"/>
    <property type="evidence" value="ECO:0007669"/>
    <property type="project" value="InterPro"/>
</dbReference>
<dbReference type="GO" id="GO:0005524">
    <property type="term" value="F:ATP binding"/>
    <property type="evidence" value="ECO:0007669"/>
    <property type="project" value="UniProtKB-UniRule"/>
</dbReference>
<dbReference type="GO" id="GO:0140096">
    <property type="term" value="F:catalytic activity, acting on a protein"/>
    <property type="evidence" value="ECO:0007669"/>
    <property type="project" value="UniProtKB-ARBA"/>
</dbReference>
<dbReference type="GO" id="GO:0004827">
    <property type="term" value="F:proline-tRNA ligase activity"/>
    <property type="evidence" value="ECO:0007669"/>
    <property type="project" value="UniProtKB-UniRule"/>
</dbReference>
<dbReference type="GO" id="GO:0016740">
    <property type="term" value="F:transferase activity"/>
    <property type="evidence" value="ECO:0007669"/>
    <property type="project" value="UniProtKB-ARBA"/>
</dbReference>
<dbReference type="GO" id="GO:0006433">
    <property type="term" value="P:prolyl-tRNA aminoacylation"/>
    <property type="evidence" value="ECO:0007669"/>
    <property type="project" value="UniProtKB-UniRule"/>
</dbReference>
<dbReference type="CDD" id="cd04334">
    <property type="entry name" value="ProRS-INS"/>
    <property type="match status" value="1"/>
</dbReference>
<dbReference type="CDD" id="cd00861">
    <property type="entry name" value="ProRS_anticodon_short"/>
    <property type="match status" value="1"/>
</dbReference>
<dbReference type="FunFam" id="3.40.50.800:FF:000011">
    <property type="entry name" value="Proline--tRNA ligase"/>
    <property type="match status" value="1"/>
</dbReference>
<dbReference type="Gene3D" id="3.40.50.800">
    <property type="entry name" value="Anticodon-binding domain"/>
    <property type="match status" value="1"/>
</dbReference>
<dbReference type="Gene3D" id="3.30.930.10">
    <property type="entry name" value="Bira Bifunctional Protein, Domain 2"/>
    <property type="match status" value="2"/>
</dbReference>
<dbReference type="Gene3D" id="3.90.960.10">
    <property type="entry name" value="YbaK/aminoacyl-tRNA synthetase-associated domain"/>
    <property type="match status" value="1"/>
</dbReference>
<dbReference type="HAMAP" id="MF_01569">
    <property type="entry name" value="Pro_tRNA_synth_type1"/>
    <property type="match status" value="1"/>
</dbReference>
<dbReference type="InterPro" id="IPR002314">
    <property type="entry name" value="aa-tRNA-synt_IIb"/>
</dbReference>
<dbReference type="InterPro" id="IPR006195">
    <property type="entry name" value="aa-tRNA-synth_II"/>
</dbReference>
<dbReference type="InterPro" id="IPR045864">
    <property type="entry name" value="aa-tRNA-synth_II/BPL/LPL"/>
</dbReference>
<dbReference type="InterPro" id="IPR004154">
    <property type="entry name" value="Anticodon-bd"/>
</dbReference>
<dbReference type="InterPro" id="IPR036621">
    <property type="entry name" value="Anticodon-bd_dom_sf"/>
</dbReference>
<dbReference type="InterPro" id="IPR002316">
    <property type="entry name" value="Pro-tRNA-ligase_IIa"/>
</dbReference>
<dbReference type="InterPro" id="IPR004500">
    <property type="entry name" value="Pro-tRNA-synth_IIa_bac-type"/>
</dbReference>
<dbReference type="InterPro" id="IPR023717">
    <property type="entry name" value="Pro-tRNA-Synthase_IIa_type1"/>
</dbReference>
<dbReference type="InterPro" id="IPR050062">
    <property type="entry name" value="Pro-tRNA_synthetase"/>
</dbReference>
<dbReference type="InterPro" id="IPR044140">
    <property type="entry name" value="ProRS_anticodon_short"/>
</dbReference>
<dbReference type="InterPro" id="IPR036754">
    <property type="entry name" value="YbaK/aa-tRNA-synt-asso_dom_sf"/>
</dbReference>
<dbReference type="InterPro" id="IPR007214">
    <property type="entry name" value="YbaK/aa-tRNA-synth-assoc-dom"/>
</dbReference>
<dbReference type="NCBIfam" id="NF006625">
    <property type="entry name" value="PRK09194.1"/>
    <property type="match status" value="1"/>
</dbReference>
<dbReference type="NCBIfam" id="TIGR00409">
    <property type="entry name" value="proS_fam_II"/>
    <property type="match status" value="2"/>
</dbReference>
<dbReference type="PANTHER" id="PTHR42753">
    <property type="entry name" value="MITOCHONDRIAL RIBOSOME PROTEIN L39/PROLYL-TRNA LIGASE FAMILY MEMBER"/>
    <property type="match status" value="1"/>
</dbReference>
<dbReference type="PANTHER" id="PTHR42753:SF2">
    <property type="entry name" value="PROLINE--TRNA LIGASE"/>
    <property type="match status" value="1"/>
</dbReference>
<dbReference type="Pfam" id="PF03129">
    <property type="entry name" value="HGTP_anticodon"/>
    <property type="match status" value="1"/>
</dbReference>
<dbReference type="Pfam" id="PF00587">
    <property type="entry name" value="tRNA-synt_2b"/>
    <property type="match status" value="1"/>
</dbReference>
<dbReference type="Pfam" id="PF04073">
    <property type="entry name" value="tRNA_edit"/>
    <property type="match status" value="1"/>
</dbReference>
<dbReference type="PRINTS" id="PR01046">
    <property type="entry name" value="TRNASYNTHPRO"/>
</dbReference>
<dbReference type="SUPFAM" id="SSF52954">
    <property type="entry name" value="Class II aaRS ABD-related"/>
    <property type="match status" value="1"/>
</dbReference>
<dbReference type="SUPFAM" id="SSF55681">
    <property type="entry name" value="Class II aaRS and biotin synthetases"/>
    <property type="match status" value="1"/>
</dbReference>
<dbReference type="SUPFAM" id="SSF55826">
    <property type="entry name" value="YbaK/ProRS associated domain"/>
    <property type="match status" value="1"/>
</dbReference>
<dbReference type="PROSITE" id="PS50862">
    <property type="entry name" value="AA_TRNA_LIGASE_II"/>
    <property type="match status" value="1"/>
</dbReference>
<gene>
    <name evidence="1" type="primary">proS</name>
    <name type="ordered locus">SpyM51645</name>
</gene>
<evidence type="ECO:0000255" key="1">
    <source>
        <dbReference type="HAMAP-Rule" id="MF_01569"/>
    </source>
</evidence>
<comment type="function">
    <text evidence="1">Catalyzes the attachment of proline to tRNA(Pro) in a two-step reaction: proline is first activated by ATP to form Pro-AMP and then transferred to the acceptor end of tRNA(Pro). As ProRS can inadvertently accommodate and process non-cognate amino acids such as alanine and cysteine, to avoid such errors it has two additional distinct editing activities against alanine. One activity is designated as 'pretransfer' editing and involves the tRNA(Pro)-independent hydrolysis of activated Ala-AMP. The other activity is designated 'posttransfer' editing and involves deacylation of mischarged Ala-tRNA(Pro). The misacylated Cys-tRNA(Pro) is not edited by ProRS.</text>
</comment>
<comment type="catalytic activity">
    <reaction evidence="1">
        <text>tRNA(Pro) + L-proline + ATP = L-prolyl-tRNA(Pro) + AMP + diphosphate</text>
        <dbReference type="Rhea" id="RHEA:14305"/>
        <dbReference type="Rhea" id="RHEA-COMP:9700"/>
        <dbReference type="Rhea" id="RHEA-COMP:9702"/>
        <dbReference type="ChEBI" id="CHEBI:30616"/>
        <dbReference type="ChEBI" id="CHEBI:33019"/>
        <dbReference type="ChEBI" id="CHEBI:60039"/>
        <dbReference type="ChEBI" id="CHEBI:78442"/>
        <dbReference type="ChEBI" id="CHEBI:78532"/>
        <dbReference type="ChEBI" id="CHEBI:456215"/>
        <dbReference type="EC" id="6.1.1.15"/>
    </reaction>
</comment>
<comment type="subunit">
    <text evidence="1">Homodimer.</text>
</comment>
<comment type="subcellular location">
    <subcellularLocation>
        <location evidence="1">Cytoplasm</location>
    </subcellularLocation>
</comment>
<comment type="domain">
    <text evidence="1">Consists of three domains: the N-terminal catalytic domain, the editing domain and the C-terminal anticodon-binding domain.</text>
</comment>
<comment type="similarity">
    <text evidence="1">Belongs to the class-II aminoacyl-tRNA synthetase family. ProS type 1 subfamily.</text>
</comment>